<dbReference type="EC" id="2.3.1.181" evidence="1"/>
<dbReference type="EMBL" id="CP000140">
    <property type="protein sequence ID" value="ABR42305.1"/>
    <property type="molecule type" value="Genomic_DNA"/>
</dbReference>
<dbReference type="RefSeq" id="WP_005855691.1">
    <property type="nucleotide sequence ID" value="NZ_LR215978.1"/>
</dbReference>
<dbReference type="SMR" id="A6L9E1"/>
<dbReference type="STRING" id="435591.BDI_0529"/>
<dbReference type="PaxDb" id="435591-BDI_0529"/>
<dbReference type="KEGG" id="pdi:BDI_0529"/>
<dbReference type="eggNOG" id="COG0321">
    <property type="taxonomic scope" value="Bacteria"/>
</dbReference>
<dbReference type="HOGENOM" id="CLU_035168_1_3_10"/>
<dbReference type="BioCyc" id="PDIS435591:G1G5A-545-MONOMER"/>
<dbReference type="UniPathway" id="UPA00538">
    <property type="reaction ID" value="UER00592"/>
</dbReference>
<dbReference type="Proteomes" id="UP000000566">
    <property type="component" value="Chromosome"/>
</dbReference>
<dbReference type="GO" id="GO:0005737">
    <property type="term" value="C:cytoplasm"/>
    <property type="evidence" value="ECO:0007669"/>
    <property type="project" value="UniProtKB-SubCell"/>
</dbReference>
<dbReference type="GO" id="GO:0033819">
    <property type="term" value="F:lipoyl(octanoyl) transferase activity"/>
    <property type="evidence" value="ECO:0007669"/>
    <property type="project" value="UniProtKB-EC"/>
</dbReference>
<dbReference type="GO" id="GO:0036211">
    <property type="term" value="P:protein modification process"/>
    <property type="evidence" value="ECO:0007669"/>
    <property type="project" value="InterPro"/>
</dbReference>
<dbReference type="CDD" id="cd16444">
    <property type="entry name" value="LipB"/>
    <property type="match status" value="1"/>
</dbReference>
<dbReference type="Gene3D" id="3.30.930.10">
    <property type="entry name" value="Bira Bifunctional Protein, Domain 2"/>
    <property type="match status" value="1"/>
</dbReference>
<dbReference type="HAMAP" id="MF_00013">
    <property type="entry name" value="LipB"/>
    <property type="match status" value="1"/>
</dbReference>
<dbReference type="InterPro" id="IPR045864">
    <property type="entry name" value="aa-tRNA-synth_II/BPL/LPL"/>
</dbReference>
<dbReference type="InterPro" id="IPR004143">
    <property type="entry name" value="BPL_LPL_catalytic"/>
</dbReference>
<dbReference type="InterPro" id="IPR000544">
    <property type="entry name" value="Octanoyltransferase"/>
</dbReference>
<dbReference type="InterPro" id="IPR020605">
    <property type="entry name" value="Octanoyltransferase_CS"/>
</dbReference>
<dbReference type="NCBIfam" id="TIGR00214">
    <property type="entry name" value="lipB"/>
    <property type="match status" value="1"/>
</dbReference>
<dbReference type="NCBIfam" id="NF010925">
    <property type="entry name" value="PRK14345.1"/>
    <property type="match status" value="1"/>
</dbReference>
<dbReference type="PANTHER" id="PTHR10993">
    <property type="entry name" value="OCTANOYLTRANSFERASE"/>
    <property type="match status" value="1"/>
</dbReference>
<dbReference type="PANTHER" id="PTHR10993:SF12">
    <property type="entry name" value="OCTANOYLTRANSFERASE"/>
    <property type="match status" value="1"/>
</dbReference>
<dbReference type="Pfam" id="PF21948">
    <property type="entry name" value="LplA-B_cat"/>
    <property type="match status" value="1"/>
</dbReference>
<dbReference type="PIRSF" id="PIRSF016262">
    <property type="entry name" value="LPLase"/>
    <property type="match status" value="1"/>
</dbReference>
<dbReference type="SUPFAM" id="SSF55681">
    <property type="entry name" value="Class II aaRS and biotin synthetases"/>
    <property type="match status" value="1"/>
</dbReference>
<dbReference type="PROSITE" id="PS51733">
    <property type="entry name" value="BPL_LPL_CATALYTIC"/>
    <property type="match status" value="1"/>
</dbReference>
<dbReference type="PROSITE" id="PS01313">
    <property type="entry name" value="LIPB"/>
    <property type="match status" value="1"/>
</dbReference>
<organism>
    <name type="scientific">Parabacteroides distasonis (strain ATCC 8503 / DSM 20701 / CIP 104284 / JCM 5825 / NCTC 11152)</name>
    <dbReference type="NCBI Taxonomy" id="435591"/>
    <lineage>
        <taxon>Bacteria</taxon>
        <taxon>Pseudomonadati</taxon>
        <taxon>Bacteroidota</taxon>
        <taxon>Bacteroidia</taxon>
        <taxon>Bacteroidales</taxon>
        <taxon>Tannerellaceae</taxon>
        <taxon>Parabacteroides</taxon>
    </lineage>
</organism>
<reference key="1">
    <citation type="journal article" date="2007" name="PLoS Biol.">
        <title>Evolution of symbiotic bacteria in the distal human intestine.</title>
        <authorList>
            <person name="Xu J."/>
            <person name="Mahowald M.A."/>
            <person name="Ley R.E."/>
            <person name="Lozupone C.A."/>
            <person name="Hamady M."/>
            <person name="Martens E.C."/>
            <person name="Henrissat B."/>
            <person name="Coutinho P.M."/>
            <person name="Minx P."/>
            <person name="Latreille P."/>
            <person name="Cordum H."/>
            <person name="Van Brunt A."/>
            <person name="Kim K."/>
            <person name="Fulton R.S."/>
            <person name="Fulton L.A."/>
            <person name="Clifton S.W."/>
            <person name="Wilson R.K."/>
            <person name="Knight R.D."/>
            <person name="Gordon J.I."/>
        </authorList>
    </citation>
    <scope>NUCLEOTIDE SEQUENCE [LARGE SCALE GENOMIC DNA]</scope>
    <source>
        <strain>ATCC 8503 / DSM 20701 / CIP 104284 / JCM 5825 / NCTC 11152</strain>
    </source>
</reference>
<name>LIPB_PARD8</name>
<accession>A6L9E1</accession>
<feature type="chain" id="PRO_0000321654" description="Octanoyltransferase">
    <location>
        <begin position="1"/>
        <end position="221"/>
    </location>
</feature>
<feature type="domain" description="BPL/LPL catalytic" evidence="2">
    <location>
        <begin position="36"/>
        <end position="221"/>
    </location>
</feature>
<feature type="active site" description="Acyl-thioester intermediate" evidence="1">
    <location>
        <position position="185"/>
    </location>
</feature>
<feature type="binding site" evidence="1">
    <location>
        <begin position="81"/>
        <end position="88"/>
    </location>
    <ligand>
        <name>substrate</name>
    </ligand>
</feature>
<feature type="binding site" evidence="1">
    <location>
        <begin position="154"/>
        <end position="156"/>
    </location>
    <ligand>
        <name>substrate</name>
    </ligand>
</feature>
<feature type="binding site" evidence="1">
    <location>
        <begin position="167"/>
        <end position="169"/>
    </location>
    <ligand>
        <name>substrate</name>
    </ligand>
</feature>
<feature type="site" description="Lowers pKa of active site Cys" evidence="1">
    <location>
        <position position="151"/>
    </location>
</feature>
<sequence>MESFRYHDLGRIAYADALEYQTAAFEVLLDAKATGKKEDNQLFFCEHLPVLTIGKSGKDSNLLIPEETLRERGVSFYHINRGGDITYHGPGQITGYPVFDLEYWNLGLKQYIHMLEETIIRFLSLYDLKGERLEGATGVWLDPEVPGRARKICAIGVKSSRFVTMHGFALNINTDLSYFSLINPCGFTDKGVTSLAMELGVPQDFELAKSQLRSIFMEIFA</sequence>
<evidence type="ECO:0000255" key="1">
    <source>
        <dbReference type="HAMAP-Rule" id="MF_00013"/>
    </source>
</evidence>
<evidence type="ECO:0000255" key="2">
    <source>
        <dbReference type="PROSITE-ProRule" id="PRU01067"/>
    </source>
</evidence>
<keyword id="KW-0012">Acyltransferase</keyword>
<keyword id="KW-0963">Cytoplasm</keyword>
<keyword id="KW-1185">Reference proteome</keyword>
<keyword id="KW-0808">Transferase</keyword>
<proteinExistence type="inferred from homology"/>
<protein>
    <recommendedName>
        <fullName evidence="1">Octanoyltransferase</fullName>
        <ecNumber evidence="1">2.3.1.181</ecNumber>
    </recommendedName>
    <alternativeName>
        <fullName evidence="1">Lipoate-protein ligase B</fullName>
    </alternativeName>
    <alternativeName>
        <fullName evidence="1">Lipoyl/octanoyl transferase</fullName>
    </alternativeName>
    <alternativeName>
        <fullName evidence="1">Octanoyl-[acyl-carrier-protein]-protein N-octanoyltransferase</fullName>
    </alternativeName>
</protein>
<comment type="function">
    <text evidence="1">Catalyzes the transfer of endogenously produced octanoic acid from octanoyl-acyl-carrier-protein onto the lipoyl domains of lipoate-dependent enzymes. Lipoyl-ACP can also act as a substrate although octanoyl-ACP is likely to be the physiological substrate.</text>
</comment>
<comment type="catalytic activity">
    <reaction evidence="1">
        <text>octanoyl-[ACP] + L-lysyl-[protein] = N(6)-octanoyl-L-lysyl-[protein] + holo-[ACP] + H(+)</text>
        <dbReference type="Rhea" id="RHEA:17665"/>
        <dbReference type="Rhea" id="RHEA-COMP:9636"/>
        <dbReference type="Rhea" id="RHEA-COMP:9685"/>
        <dbReference type="Rhea" id="RHEA-COMP:9752"/>
        <dbReference type="Rhea" id="RHEA-COMP:9928"/>
        <dbReference type="ChEBI" id="CHEBI:15378"/>
        <dbReference type="ChEBI" id="CHEBI:29969"/>
        <dbReference type="ChEBI" id="CHEBI:64479"/>
        <dbReference type="ChEBI" id="CHEBI:78463"/>
        <dbReference type="ChEBI" id="CHEBI:78809"/>
        <dbReference type="EC" id="2.3.1.181"/>
    </reaction>
</comment>
<comment type="pathway">
    <text evidence="1">Protein modification; protein lipoylation via endogenous pathway; protein N(6)-(lipoyl)lysine from octanoyl-[acyl-carrier-protein]: step 1/2.</text>
</comment>
<comment type="subcellular location">
    <subcellularLocation>
        <location evidence="1">Cytoplasm</location>
    </subcellularLocation>
</comment>
<comment type="miscellaneous">
    <text evidence="1">In the reaction, the free carboxyl group of octanoic acid is attached via an amide linkage to the epsilon-amino group of a specific lysine residue of lipoyl domains of lipoate-dependent enzymes.</text>
</comment>
<comment type="similarity">
    <text evidence="1">Belongs to the LipB family.</text>
</comment>
<gene>
    <name evidence="1" type="primary">lipB</name>
    <name type="ordered locus">BDI_0529</name>
</gene>